<comment type="function">
    <text evidence="2">Bifunctional DNA N-glycosylase with associated apurinic/apyrimidinic (AP) lyase function that catalyzes the first step in base excision repair (BER), the primary repair pathway for the repair of oxidative DNA damage. The DNA N-glycosylase activity releases the damaged DNA base from DNA by cleaving the N-glycosidic bond, leaving an AP site. The AP lyase activity cleaves the phosphodiester bond 3' to the AP site by a beta-elimination. Primarily recognizes and repairs oxidative base damage of pyrimidines.</text>
</comment>
<comment type="catalytic activity">
    <reaction evidence="2">
        <text>2'-deoxyribonucleotide-(2'-deoxyribose 5'-phosphate)-2'-deoxyribonucleotide-DNA = a 3'-end 2'-deoxyribonucleotide-(2,3-dehydro-2,3-deoxyribose 5'-phosphate)-DNA + a 5'-end 5'-phospho-2'-deoxyribonucleoside-DNA + H(+)</text>
        <dbReference type="Rhea" id="RHEA:66592"/>
        <dbReference type="Rhea" id="RHEA-COMP:13180"/>
        <dbReference type="Rhea" id="RHEA-COMP:16897"/>
        <dbReference type="Rhea" id="RHEA-COMP:17067"/>
        <dbReference type="ChEBI" id="CHEBI:15378"/>
        <dbReference type="ChEBI" id="CHEBI:136412"/>
        <dbReference type="ChEBI" id="CHEBI:157695"/>
        <dbReference type="ChEBI" id="CHEBI:167181"/>
        <dbReference type="EC" id="4.2.99.18"/>
    </reaction>
</comment>
<comment type="cofactor">
    <cofactor evidence="2">
        <name>[4Fe-4S] cluster</name>
        <dbReference type="ChEBI" id="CHEBI:49883"/>
    </cofactor>
    <text evidence="2">Binds 1 [4Fe-4S] cluster. The cluster does not appear to play a role in catalysis, but is probably involved in the proper positioning of the enzyme along the DNA strand.</text>
</comment>
<comment type="subunit">
    <text evidence="1 2">Interacts with YBX1 (By similarity). Interacts with ERCC5/XPG; the interaction stimulates NTHL1 activity and NTHL1 binding to its DNA substrate (By similarity).</text>
</comment>
<comment type="subcellular location">
    <subcellularLocation>
        <location evidence="2">Nucleus</location>
    </subcellularLocation>
    <subcellularLocation>
        <location evidence="2">Mitochondrion</location>
    </subcellularLocation>
</comment>
<comment type="similarity">
    <text evidence="2">Belongs to the Nth/MutY family.</text>
</comment>
<proteinExistence type="evidence at transcript level"/>
<dbReference type="EC" id="3.2.2.-" evidence="2"/>
<dbReference type="EC" id="4.2.99.18" evidence="2"/>
<dbReference type="EMBL" id="GJ062847">
    <property type="protein sequence ID" value="DAA15605.1"/>
    <property type="molecule type" value="Genomic_DNA"/>
</dbReference>
<dbReference type="EMBL" id="BC112681">
    <property type="protein sequence ID" value="AAI12682.1"/>
    <property type="molecule type" value="mRNA"/>
</dbReference>
<dbReference type="RefSeq" id="NP_001039862.1">
    <property type="nucleotide sequence ID" value="NM_001046397.2"/>
</dbReference>
<dbReference type="SMR" id="Q2KID2"/>
<dbReference type="FunCoup" id="Q2KID2">
    <property type="interactions" value="1739"/>
</dbReference>
<dbReference type="STRING" id="9913.ENSBTAP00000067295"/>
<dbReference type="PaxDb" id="9913-ENSBTAP00000046623"/>
<dbReference type="GeneID" id="535203"/>
<dbReference type="KEGG" id="bta:535203"/>
<dbReference type="CTD" id="4913"/>
<dbReference type="VEuPathDB" id="HostDB:ENSBTAG00000006272"/>
<dbReference type="eggNOG" id="KOG1921">
    <property type="taxonomic scope" value="Eukaryota"/>
</dbReference>
<dbReference type="HOGENOM" id="CLU_012862_4_2_1"/>
<dbReference type="InParanoid" id="Q2KID2"/>
<dbReference type="OrthoDB" id="2099276at2759"/>
<dbReference type="TreeFam" id="TF314967"/>
<dbReference type="Reactome" id="R-BTA-110329">
    <property type="pathway name" value="Cleavage of the damaged pyrimidine"/>
</dbReference>
<dbReference type="Reactome" id="R-BTA-110357">
    <property type="pathway name" value="Displacement of DNA glycosylase by APEX1"/>
</dbReference>
<dbReference type="Proteomes" id="UP000009136">
    <property type="component" value="Chromosome 25"/>
</dbReference>
<dbReference type="Bgee" id="ENSBTAG00000006272">
    <property type="expression patterns" value="Expressed in isthmus of fallopian tube and 105 other cell types or tissues"/>
</dbReference>
<dbReference type="GO" id="GO:0005739">
    <property type="term" value="C:mitochondrion"/>
    <property type="evidence" value="ECO:0007669"/>
    <property type="project" value="UniProtKB-SubCell"/>
</dbReference>
<dbReference type="GO" id="GO:0005634">
    <property type="term" value="C:nucleus"/>
    <property type="evidence" value="ECO:0000318"/>
    <property type="project" value="GO_Central"/>
</dbReference>
<dbReference type="GO" id="GO:0051539">
    <property type="term" value="F:4 iron, 4 sulfur cluster binding"/>
    <property type="evidence" value="ECO:0007669"/>
    <property type="project" value="UniProtKB-KW"/>
</dbReference>
<dbReference type="GO" id="GO:0140078">
    <property type="term" value="F:class I DNA-(apurinic or apyrimidinic site) endonuclease activity"/>
    <property type="evidence" value="ECO:0007669"/>
    <property type="project" value="UniProtKB-EC"/>
</dbReference>
<dbReference type="GO" id="GO:0003677">
    <property type="term" value="F:DNA binding"/>
    <property type="evidence" value="ECO:0007669"/>
    <property type="project" value="UniProtKB-UniRule"/>
</dbReference>
<dbReference type="GO" id="GO:0003906">
    <property type="term" value="F:DNA-(apurinic or apyrimidinic site) endonuclease activity"/>
    <property type="evidence" value="ECO:0000318"/>
    <property type="project" value="GO_Central"/>
</dbReference>
<dbReference type="GO" id="GO:0046872">
    <property type="term" value="F:metal ion binding"/>
    <property type="evidence" value="ECO:0007669"/>
    <property type="project" value="UniProtKB-KW"/>
</dbReference>
<dbReference type="GO" id="GO:0000703">
    <property type="term" value="F:oxidized pyrimidine nucleobase lesion DNA N-glycosylase activity"/>
    <property type="evidence" value="ECO:0000318"/>
    <property type="project" value="GO_Central"/>
</dbReference>
<dbReference type="GO" id="GO:0006285">
    <property type="term" value="P:base-excision repair, AP site formation"/>
    <property type="evidence" value="ECO:0000318"/>
    <property type="project" value="GO_Central"/>
</dbReference>
<dbReference type="GO" id="GO:0006289">
    <property type="term" value="P:nucleotide-excision repair"/>
    <property type="evidence" value="ECO:0000318"/>
    <property type="project" value="GO_Central"/>
</dbReference>
<dbReference type="CDD" id="cd00056">
    <property type="entry name" value="ENDO3c"/>
    <property type="match status" value="1"/>
</dbReference>
<dbReference type="FunFam" id="1.10.1670.10:FF:000027">
    <property type="entry name" value="Endonuclease III homolog"/>
    <property type="match status" value="1"/>
</dbReference>
<dbReference type="FunFam" id="1.10.340.30:FF:000005">
    <property type="entry name" value="Endonuclease III-like protein 1"/>
    <property type="match status" value="1"/>
</dbReference>
<dbReference type="Gene3D" id="1.10.1670.10">
    <property type="entry name" value="Helix-hairpin-Helix base-excision DNA repair enzymes (C-terminal)"/>
    <property type="match status" value="1"/>
</dbReference>
<dbReference type="Gene3D" id="1.10.340.30">
    <property type="entry name" value="Hypothetical protein, domain 2"/>
    <property type="match status" value="1"/>
</dbReference>
<dbReference type="HAMAP" id="MF_03183">
    <property type="entry name" value="Endonuclease_III_Nth"/>
    <property type="match status" value="1"/>
</dbReference>
<dbReference type="InterPro" id="IPR011257">
    <property type="entry name" value="DNA_glycosylase"/>
</dbReference>
<dbReference type="InterPro" id="IPR004036">
    <property type="entry name" value="Endonuclease-III-like_CS2"/>
</dbReference>
<dbReference type="InterPro" id="IPR003651">
    <property type="entry name" value="Endonuclease3_FeS-loop_motif"/>
</dbReference>
<dbReference type="InterPro" id="IPR004035">
    <property type="entry name" value="Endouclease-III_FeS-bd_BS"/>
</dbReference>
<dbReference type="InterPro" id="IPR003265">
    <property type="entry name" value="HhH-GPD_domain"/>
</dbReference>
<dbReference type="InterPro" id="IPR023170">
    <property type="entry name" value="HhH_base_excis_C"/>
</dbReference>
<dbReference type="InterPro" id="IPR000445">
    <property type="entry name" value="HhH_motif"/>
</dbReference>
<dbReference type="InterPro" id="IPR030841">
    <property type="entry name" value="NTH1"/>
</dbReference>
<dbReference type="PANTHER" id="PTHR43286">
    <property type="entry name" value="ENDONUCLEASE III-LIKE PROTEIN 1"/>
    <property type="match status" value="1"/>
</dbReference>
<dbReference type="PANTHER" id="PTHR43286:SF1">
    <property type="entry name" value="ENDONUCLEASE III-LIKE PROTEIN 1"/>
    <property type="match status" value="1"/>
</dbReference>
<dbReference type="Pfam" id="PF00633">
    <property type="entry name" value="HHH"/>
    <property type="match status" value="1"/>
</dbReference>
<dbReference type="Pfam" id="PF00730">
    <property type="entry name" value="HhH-GPD"/>
    <property type="match status" value="1"/>
</dbReference>
<dbReference type="SMART" id="SM00478">
    <property type="entry name" value="ENDO3c"/>
    <property type="match status" value="1"/>
</dbReference>
<dbReference type="SMART" id="SM00525">
    <property type="entry name" value="FES"/>
    <property type="match status" value="1"/>
</dbReference>
<dbReference type="SUPFAM" id="SSF48150">
    <property type="entry name" value="DNA-glycosylase"/>
    <property type="match status" value="1"/>
</dbReference>
<dbReference type="PROSITE" id="PS00764">
    <property type="entry name" value="ENDONUCLEASE_III_1"/>
    <property type="match status" value="1"/>
</dbReference>
<dbReference type="PROSITE" id="PS01155">
    <property type="entry name" value="ENDONUCLEASE_III_2"/>
    <property type="match status" value="1"/>
</dbReference>
<sequence length="305" mass="33645">MNAAGVRMVVTRARSRGTGASLRRRGEKAAPLRSGEAAAEERKSYSPVKRRRKAQRLSVAYEASEGEGGEGAEHLQAPSWQPQDWRQQLDNIRTMRSGKDAPVDQLGAEHCFDPSASPKVRRYQVLLSLMLSSQTKDQVTAGAMQRLRARGLTVDSILQTDDSTLGALIYPVGFWRSKVKYIKQTSAILQQRYDGDIPASVAELVALPGVGPKMAHLAMAVAWGTVSGIAVDTHVHRIANRLRWTKKATKSPEETRRALEEWLPRELWSEINGLLVGFGQQTCLPIRPRCQACLNRALCPAARGL</sequence>
<feature type="transit peptide" description="Mitochondrion" evidence="2">
    <location>
        <begin position="1"/>
        <end position="28"/>
    </location>
</feature>
<feature type="chain" id="PRO_0000244406" description="Endonuclease III-like protein 1">
    <location>
        <begin position="29"/>
        <end position="305"/>
    </location>
</feature>
<feature type="domain" description="HhH" evidence="2">
    <location>
        <begin position="192"/>
        <end position="216"/>
    </location>
</feature>
<feature type="region of interest" description="Disordered" evidence="3">
    <location>
        <begin position="1"/>
        <end position="83"/>
    </location>
</feature>
<feature type="active site" description="Nucleophile; for N-glycosylase activity" evidence="2">
    <location>
        <position position="213"/>
    </location>
</feature>
<feature type="binding site" evidence="2">
    <location>
        <position position="283"/>
    </location>
    <ligand>
        <name>[4Fe-4S] cluster</name>
        <dbReference type="ChEBI" id="CHEBI:49883"/>
    </ligand>
</feature>
<feature type="binding site" evidence="2">
    <location>
        <position position="290"/>
    </location>
    <ligand>
        <name>[4Fe-4S] cluster</name>
        <dbReference type="ChEBI" id="CHEBI:49883"/>
    </ligand>
</feature>
<feature type="binding site" evidence="2">
    <location>
        <position position="293"/>
    </location>
    <ligand>
        <name>[4Fe-4S] cluster</name>
        <dbReference type="ChEBI" id="CHEBI:49883"/>
    </ligand>
</feature>
<feature type="binding site" evidence="2">
    <location>
        <position position="299"/>
    </location>
    <ligand>
        <name>[4Fe-4S] cluster</name>
        <dbReference type="ChEBI" id="CHEBI:49883"/>
    </ligand>
</feature>
<feature type="site" description="Important for catalytic activity" evidence="2">
    <location>
        <position position="232"/>
    </location>
</feature>
<feature type="modified residue" description="Phosphoserine" evidence="1">
    <location>
        <position position="64"/>
    </location>
</feature>
<organism>
    <name type="scientific">Bos taurus</name>
    <name type="common">Bovine</name>
    <dbReference type="NCBI Taxonomy" id="9913"/>
    <lineage>
        <taxon>Eukaryota</taxon>
        <taxon>Metazoa</taxon>
        <taxon>Chordata</taxon>
        <taxon>Craniata</taxon>
        <taxon>Vertebrata</taxon>
        <taxon>Euteleostomi</taxon>
        <taxon>Mammalia</taxon>
        <taxon>Eutheria</taxon>
        <taxon>Laurasiatheria</taxon>
        <taxon>Artiodactyla</taxon>
        <taxon>Ruminantia</taxon>
        <taxon>Pecora</taxon>
        <taxon>Bovidae</taxon>
        <taxon>Bovinae</taxon>
        <taxon>Bos</taxon>
    </lineage>
</organism>
<protein>
    <recommendedName>
        <fullName evidence="2">Endonuclease III-like protein 1</fullName>
        <ecNumber evidence="2">3.2.2.-</ecNumber>
        <ecNumber evidence="2">4.2.99.18</ecNumber>
    </recommendedName>
    <alternativeName>
        <fullName evidence="2">Bifunctional DNA N-glycosylase/DNA-(apurinic or apyrimidinic site) lyase</fullName>
        <shortName evidence="2">DNA glycosylase/AP lyase</shortName>
    </alternativeName>
</protein>
<name>NTH_BOVIN</name>
<reference key="1">
    <citation type="journal article" date="2009" name="Genome Biol.">
        <title>A whole-genome assembly of the domestic cow, Bos taurus.</title>
        <authorList>
            <person name="Zimin A.V."/>
            <person name="Delcher A.L."/>
            <person name="Florea L."/>
            <person name="Kelley D.R."/>
            <person name="Schatz M.C."/>
            <person name="Puiu D."/>
            <person name="Hanrahan F."/>
            <person name="Pertea G."/>
            <person name="Van Tassell C.P."/>
            <person name="Sonstegard T.S."/>
            <person name="Marcais G."/>
            <person name="Roberts M."/>
            <person name="Subramanian P."/>
            <person name="Yorke J.A."/>
            <person name="Salzberg S.L."/>
        </authorList>
    </citation>
    <scope>NUCLEOTIDE SEQUENCE [LARGE SCALE GENOMIC DNA]</scope>
    <scope>GENOME REANNOTATION</scope>
    <source>
        <strain evidence="4">Hereford</strain>
    </source>
</reference>
<reference key="2">
    <citation type="submission" date="2006-01" db="EMBL/GenBank/DDBJ databases">
        <authorList>
            <consortium name="NIH - Mammalian Gene Collection (MGC) project"/>
        </authorList>
    </citation>
    <scope>NUCLEOTIDE SEQUENCE [LARGE SCALE MRNA]</scope>
    <source>
        <strain>Hereford</strain>
        <tissue>Hypothalamus</tissue>
    </source>
</reference>
<accession>Q2KID2</accession>
<accession>M5FK15</accession>
<gene>
    <name evidence="2" type="primary">NTHL1</name>
</gene>
<evidence type="ECO:0000250" key="1">
    <source>
        <dbReference type="UniProtKB" id="P78549"/>
    </source>
</evidence>
<evidence type="ECO:0000255" key="2">
    <source>
        <dbReference type="HAMAP-Rule" id="MF_03183"/>
    </source>
</evidence>
<evidence type="ECO:0000256" key="3">
    <source>
        <dbReference type="SAM" id="MobiDB-lite"/>
    </source>
</evidence>
<evidence type="ECO:0000312" key="4">
    <source>
        <dbReference type="Proteomes" id="UP000009136"/>
    </source>
</evidence>
<keyword id="KW-0004">4Fe-4S</keyword>
<keyword id="KW-0227">DNA damage</keyword>
<keyword id="KW-0234">DNA repair</keyword>
<keyword id="KW-0326">Glycosidase</keyword>
<keyword id="KW-0378">Hydrolase</keyword>
<keyword id="KW-0408">Iron</keyword>
<keyword id="KW-0411">Iron-sulfur</keyword>
<keyword id="KW-0456">Lyase</keyword>
<keyword id="KW-0479">Metal-binding</keyword>
<keyword id="KW-0496">Mitochondrion</keyword>
<keyword id="KW-0539">Nucleus</keyword>
<keyword id="KW-0597">Phosphoprotein</keyword>
<keyword id="KW-1185">Reference proteome</keyword>
<keyword id="KW-0809">Transit peptide</keyword>